<keyword id="KW-0963">Cytoplasm</keyword>
<keyword id="KW-0671">Queuosine biosynthesis</keyword>
<keyword id="KW-1185">Reference proteome</keyword>
<keyword id="KW-0949">S-adenosyl-L-methionine</keyword>
<keyword id="KW-0808">Transferase</keyword>
<gene>
    <name evidence="1" type="primary">queA</name>
    <name type="ordered locus">LL1575</name>
    <name type="ORF">L16514</name>
</gene>
<evidence type="ECO:0000255" key="1">
    <source>
        <dbReference type="HAMAP-Rule" id="MF_00113"/>
    </source>
</evidence>
<organism>
    <name type="scientific">Lactococcus lactis subsp. lactis (strain IL1403)</name>
    <name type="common">Streptococcus lactis</name>
    <dbReference type="NCBI Taxonomy" id="272623"/>
    <lineage>
        <taxon>Bacteria</taxon>
        <taxon>Bacillati</taxon>
        <taxon>Bacillota</taxon>
        <taxon>Bacilli</taxon>
        <taxon>Lactobacillales</taxon>
        <taxon>Streptococcaceae</taxon>
        <taxon>Lactococcus</taxon>
    </lineage>
</organism>
<dbReference type="EC" id="2.4.99.17" evidence="1"/>
<dbReference type="EMBL" id="AE005176">
    <property type="protein sequence ID" value="AAK05673.1"/>
    <property type="molecule type" value="Genomic_DNA"/>
</dbReference>
<dbReference type="PIR" id="G86821">
    <property type="entry name" value="G86821"/>
</dbReference>
<dbReference type="RefSeq" id="NP_267731.1">
    <property type="nucleotide sequence ID" value="NC_002662.1"/>
</dbReference>
<dbReference type="RefSeq" id="WP_003130719.1">
    <property type="nucleotide sequence ID" value="NC_002662.1"/>
</dbReference>
<dbReference type="SMR" id="Q9CFA6"/>
<dbReference type="PaxDb" id="272623-L16514"/>
<dbReference type="EnsemblBacteria" id="AAK05673">
    <property type="protein sequence ID" value="AAK05673"/>
    <property type="gene ID" value="L16514"/>
</dbReference>
<dbReference type="KEGG" id="lla:L16514"/>
<dbReference type="PATRIC" id="fig|272623.7.peg.1693"/>
<dbReference type="eggNOG" id="COG0809">
    <property type="taxonomic scope" value="Bacteria"/>
</dbReference>
<dbReference type="HOGENOM" id="CLU_039110_1_0_9"/>
<dbReference type="OrthoDB" id="9805933at2"/>
<dbReference type="UniPathway" id="UPA00392"/>
<dbReference type="Proteomes" id="UP000002196">
    <property type="component" value="Chromosome"/>
</dbReference>
<dbReference type="GO" id="GO:0005737">
    <property type="term" value="C:cytoplasm"/>
    <property type="evidence" value="ECO:0007669"/>
    <property type="project" value="UniProtKB-SubCell"/>
</dbReference>
<dbReference type="GO" id="GO:0051075">
    <property type="term" value="F:S-adenosylmethionine:tRNA ribosyltransferase-isomerase activity"/>
    <property type="evidence" value="ECO:0007669"/>
    <property type="project" value="UniProtKB-EC"/>
</dbReference>
<dbReference type="GO" id="GO:0008616">
    <property type="term" value="P:queuosine biosynthetic process"/>
    <property type="evidence" value="ECO:0007669"/>
    <property type="project" value="UniProtKB-UniRule"/>
</dbReference>
<dbReference type="GO" id="GO:0002099">
    <property type="term" value="P:tRNA wobble guanine modification"/>
    <property type="evidence" value="ECO:0007669"/>
    <property type="project" value="TreeGrafter"/>
</dbReference>
<dbReference type="FunFam" id="2.40.10.240:FF:000002">
    <property type="entry name" value="S-adenosylmethionine:tRNA ribosyltransferase-isomerase"/>
    <property type="match status" value="1"/>
</dbReference>
<dbReference type="FunFam" id="3.40.1780.10:FF:000001">
    <property type="entry name" value="S-adenosylmethionine:tRNA ribosyltransferase-isomerase"/>
    <property type="match status" value="1"/>
</dbReference>
<dbReference type="Gene3D" id="2.40.10.240">
    <property type="entry name" value="QueA-like"/>
    <property type="match status" value="1"/>
</dbReference>
<dbReference type="Gene3D" id="3.40.1780.10">
    <property type="entry name" value="QueA-like"/>
    <property type="match status" value="1"/>
</dbReference>
<dbReference type="HAMAP" id="MF_00113">
    <property type="entry name" value="QueA"/>
    <property type="match status" value="1"/>
</dbReference>
<dbReference type="InterPro" id="IPR003699">
    <property type="entry name" value="QueA"/>
</dbReference>
<dbReference type="InterPro" id="IPR042118">
    <property type="entry name" value="QueA_dom1"/>
</dbReference>
<dbReference type="InterPro" id="IPR042119">
    <property type="entry name" value="QueA_dom2"/>
</dbReference>
<dbReference type="InterPro" id="IPR036100">
    <property type="entry name" value="QueA_sf"/>
</dbReference>
<dbReference type="NCBIfam" id="NF001140">
    <property type="entry name" value="PRK00147.1"/>
    <property type="match status" value="1"/>
</dbReference>
<dbReference type="NCBIfam" id="TIGR00113">
    <property type="entry name" value="queA"/>
    <property type="match status" value="1"/>
</dbReference>
<dbReference type="PANTHER" id="PTHR30307">
    <property type="entry name" value="S-ADENOSYLMETHIONINE:TRNA RIBOSYLTRANSFERASE-ISOMERASE"/>
    <property type="match status" value="1"/>
</dbReference>
<dbReference type="PANTHER" id="PTHR30307:SF0">
    <property type="entry name" value="S-ADENOSYLMETHIONINE:TRNA RIBOSYLTRANSFERASE-ISOMERASE"/>
    <property type="match status" value="1"/>
</dbReference>
<dbReference type="Pfam" id="PF02547">
    <property type="entry name" value="Queuosine_synth"/>
    <property type="match status" value="1"/>
</dbReference>
<dbReference type="SUPFAM" id="SSF111337">
    <property type="entry name" value="QueA-like"/>
    <property type="match status" value="1"/>
</dbReference>
<protein>
    <recommendedName>
        <fullName evidence="1">S-adenosylmethionine:tRNA ribosyltransferase-isomerase</fullName>
        <ecNumber evidence="1">2.4.99.17</ecNumber>
    </recommendedName>
    <alternativeName>
        <fullName evidence="1">Queuosine biosynthesis protein QueA</fullName>
    </alternativeName>
</protein>
<comment type="function">
    <text evidence="1">Transfers and isomerizes the ribose moiety from AdoMet to the 7-aminomethyl group of 7-deazaguanine (preQ1-tRNA) to give epoxyqueuosine (oQ-tRNA).</text>
</comment>
<comment type="catalytic activity">
    <reaction evidence="1">
        <text>7-aminomethyl-7-carbaguanosine(34) in tRNA + S-adenosyl-L-methionine = epoxyqueuosine(34) in tRNA + adenine + L-methionine + 2 H(+)</text>
        <dbReference type="Rhea" id="RHEA:32155"/>
        <dbReference type="Rhea" id="RHEA-COMP:10342"/>
        <dbReference type="Rhea" id="RHEA-COMP:18582"/>
        <dbReference type="ChEBI" id="CHEBI:15378"/>
        <dbReference type="ChEBI" id="CHEBI:16708"/>
        <dbReference type="ChEBI" id="CHEBI:57844"/>
        <dbReference type="ChEBI" id="CHEBI:59789"/>
        <dbReference type="ChEBI" id="CHEBI:82833"/>
        <dbReference type="ChEBI" id="CHEBI:194443"/>
        <dbReference type="EC" id="2.4.99.17"/>
    </reaction>
</comment>
<comment type="pathway">
    <text evidence="1">tRNA modification; tRNA-queuosine biosynthesis.</text>
</comment>
<comment type="subunit">
    <text evidence="1">Monomer.</text>
</comment>
<comment type="subcellular location">
    <subcellularLocation>
        <location evidence="1">Cytoplasm</location>
    </subcellularLocation>
</comment>
<comment type="similarity">
    <text evidence="1">Belongs to the QueA family.</text>
</comment>
<sequence>MNINDFDFDLPEELIAQTPLEKRSESRLLILDPKTEELEDRHFYNIIDELEAGDALVLNNTRVLPARLHGERAETGGHIELLLLKDMGQNRWETLAKPARKMKVGEEVVFGDGRLKAVVVEVLDHGGRIVEFKYDGIFLEILESLGEMPLPPYIHEQLQDQERYQTVFAKENGSAAAPTAGLHYTPELLEKIADKGVKIVELTLHVGLGTFRPVSVDNVDEHQMHSEFYRLTEEAAAQLRAVKASGHKIVASGTTSIRTLETIGSKFDGDIQADSGWTDIFIKPGYEWKVVDAFNTNFHLPKSTLVMLVAAFAGRDFVLDAYQHAIDEKYRFFSFGDAMFVRPKK</sequence>
<proteinExistence type="inferred from homology"/>
<name>QUEA_LACLA</name>
<reference key="1">
    <citation type="journal article" date="2001" name="Genome Res.">
        <title>The complete genome sequence of the lactic acid bacterium Lactococcus lactis ssp. lactis IL1403.</title>
        <authorList>
            <person name="Bolotin A."/>
            <person name="Wincker P."/>
            <person name="Mauger S."/>
            <person name="Jaillon O."/>
            <person name="Malarme K."/>
            <person name="Weissenbach J."/>
            <person name="Ehrlich S.D."/>
            <person name="Sorokin A."/>
        </authorList>
    </citation>
    <scope>NUCLEOTIDE SEQUENCE [LARGE SCALE GENOMIC DNA]</scope>
    <source>
        <strain>IL1403</strain>
    </source>
</reference>
<accession>Q9CFA6</accession>
<feature type="chain" id="PRO_0000165411" description="S-adenosylmethionine:tRNA ribosyltransferase-isomerase">
    <location>
        <begin position="1"/>
        <end position="345"/>
    </location>
</feature>